<proteinExistence type="inferred from homology"/>
<comment type="function">
    <text evidence="1">One of the essential components for the initiation of protein synthesis. Stabilizes the binding of IF-2 and IF-3 on the 30S subunit to which N-formylmethionyl-tRNA(fMet) subsequently binds. Helps modulate mRNA selection, yielding the 30S pre-initiation complex (PIC). Upon addition of the 50S ribosomal subunit IF-1, IF-2 and IF-3 are released leaving the mature 70S translation initiation complex.</text>
</comment>
<comment type="subunit">
    <text evidence="1">Component of the 30S ribosomal translation pre-initiation complex which assembles on the 30S ribosome in the order IF-2 and IF-3, IF-1 and N-formylmethionyl-tRNA(fMet); mRNA recruitment can occur at any time during PIC assembly.</text>
</comment>
<comment type="subcellular location">
    <subcellularLocation>
        <location evidence="1">Cytoplasm</location>
    </subcellularLocation>
</comment>
<comment type="similarity">
    <text evidence="1">Belongs to the IF-1 family.</text>
</comment>
<evidence type="ECO:0000255" key="1">
    <source>
        <dbReference type="HAMAP-Rule" id="MF_00075"/>
    </source>
</evidence>
<dbReference type="EMBL" id="CP000891">
    <property type="protein sequence ID" value="ABX49752.1"/>
    <property type="molecule type" value="Genomic_DNA"/>
</dbReference>
<dbReference type="RefSeq" id="WP_006081934.1">
    <property type="nucleotide sequence ID" value="NC_009997.1"/>
</dbReference>
<dbReference type="SMR" id="A9L4G2"/>
<dbReference type="GeneID" id="94727745"/>
<dbReference type="KEGG" id="sbn:Sbal195_2584"/>
<dbReference type="HOGENOM" id="CLU_151267_1_0_6"/>
<dbReference type="Proteomes" id="UP000000770">
    <property type="component" value="Chromosome"/>
</dbReference>
<dbReference type="GO" id="GO:0005829">
    <property type="term" value="C:cytosol"/>
    <property type="evidence" value="ECO:0007669"/>
    <property type="project" value="TreeGrafter"/>
</dbReference>
<dbReference type="GO" id="GO:0043022">
    <property type="term" value="F:ribosome binding"/>
    <property type="evidence" value="ECO:0007669"/>
    <property type="project" value="UniProtKB-UniRule"/>
</dbReference>
<dbReference type="GO" id="GO:0019843">
    <property type="term" value="F:rRNA binding"/>
    <property type="evidence" value="ECO:0007669"/>
    <property type="project" value="UniProtKB-UniRule"/>
</dbReference>
<dbReference type="GO" id="GO:0003743">
    <property type="term" value="F:translation initiation factor activity"/>
    <property type="evidence" value="ECO:0007669"/>
    <property type="project" value="UniProtKB-UniRule"/>
</dbReference>
<dbReference type="CDD" id="cd04451">
    <property type="entry name" value="S1_IF1"/>
    <property type="match status" value="1"/>
</dbReference>
<dbReference type="FunFam" id="2.40.50.140:FF:000002">
    <property type="entry name" value="Translation initiation factor IF-1"/>
    <property type="match status" value="1"/>
</dbReference>
<dbReference type="Gene3D" id="2.40.50.140">
    <property type="entry name" value="Nucleic acid-binding proteins"/>
    <property type="match status" value="1"/>
</dbReference>
<dbReference type="HAMAP" id="MF_00075">
    <property type="entry name" value="IF_1"/>
    <property type="match status" value="1"/>
</dbReference>
<dbReference type="InterPro" id="IPR012340">
    <property type="entry name" value="NA-bd_OB-fold"/>
</dbReference>
<dbReference type="InterPro" id="IPR006196">
    <property type="entry name" value="RNA-binding_domain_S1_IF1"/>
</dbReference>
<dbReference type="InterPro" id="IPR003029">
    <property type="entry name" value="S1_domain"/>
</dbReference>
<dbReference type="InterPro" id="IPR004368">
    <property type="entry name" value="TIF_IF1"/>
</dbReference>
<dbReference type="NCBIfam" id="TIGR00008">
    <property type="entry name" value="infA"/>
    <property type="match status" value="1"/>
</dbReference>
<dbReference type="PANTHER" id="PTHR33370">
    <property type="entry name" value="TRANSLATION INITIATION FACTOR IF-1, CHLOROPLASTIC"/>
    <property type="match status" value="1"/>
</dbReference>
<dbReference type="PANTHER" id="PTHR33370:SF1">
    <property type="entry name" value="TRANSLATION INITIATION FACTOR IF-1, CHLOROPLASTIC"/>
    <property type="match status" value="1"/>
</dbReference>
<dbReference type="Pfam" id="PF01176">
    <property type="entry name" value="eIF-1a"/>
    <property type="match status" value="1"/>
</dbReference>
<dbReference type="SMART" id="SM00316">
    <property type="entry name" value="S1"/>
    <property type="match status" value="1"/>
</dbReference>
<dbReference type="SUPFAM" id="SSF50249">
    <property type="entry name" value="Nucleic acid-binding proteins"/>
    <property type="match status" value="1"/>
</dbReference>
<dbReference type="PROSITE" id="PS50832">
    <property type="entry name" value="S1_IF1_TYPE"/>
    <property type="match status" value="1"/>
</dbReference>
<name>IF1_SHEB9</name>
<keyword id="KW-0963">Cytoplasm</keyword>
<keyword id="KW-0396">Initiation factor</keyword>
<keyword id="KW-0648">Protein biosynthesis</keyword>
<keyword id="KW-0694">RNA-binding</keyword>
<keyword id="KW-0699">rRNA-binding</keyword>
<sequence length="72" mass="8273">MAKEDNIEMQGTILETLPNTMFRVELENGHVVIAHISGKMRKNYIRILTGDKVTVQLTPYDLTKGRIVFRAR</sequence>
<feature type="chain" id="PRO_0000338918" description="Translation initiation factor IF-1">
    <location>
        <begin position="1"/>
        <end position="72"/>
    </location>
</feature>
<feature type="domain" description="S1-like" evidence="1">
    <location>
        <begin position="1"/>
        <end position="72"/>
    </location>
</feature>
<reference key="1">
    <citation type="submission" date="2007-11" db="EMBL/GenBank/DDBJ databases">
        <title>Complete sequence of chromosome of Shewanella baltica OS195.</title>
        <authorList>
            <consortium name="US DOE Joint Genome Institute"/>
            <person name="Copeland A."/>
            <person name="Lucas S."/>
            <person name="Lapidus A."/>
            <person name="Barry K."/>
            <person name="Glavina del Rio T."/>
            <person name="Dalin E."/>
            <person name="Tice H."/>
            <person name="Pitluck S."/>
            <person name="Chain P."/>
            <person name="Malfatti S."/>
            <person name="Shin M."/>
            <person name="Vergez L."/>
            <person name="Schmutz J."/>
            <person name="Larimer F."/>
            <person name="Land M."/>
            <person name="Hauser L."/>
            <person name="Kyrpides N."/>
            <person name="Kim E."/>
            <person name="Brettar I."/>
            <person name="Rodrigues J."/>
            <person name="Konstantinidis K."/>
            <person name="Klappenbach J."/>
            <person name="Hofle M."/>
            <person name="Tiedje J."/>
            <person name="Richardson P."/>
        </authorList>
    </citation>
    <scope>NUCLEOTIDE SEQUENCE [LARGE SCALE GENOMIC DNA]</scope>
    <source>
        <strain>OS195</strain>
    </source>
</reference>
<gene>
    <name evidence="1" type="primary">infA</name>
    <name type="ordered locus">Sbal195_2584</name>
</gene>
<protein>
    <recommendedName>
        <fullName evidence="1">Translation initiation factor IF-1</fullName>
    </recommendedName>
</protein>
<organism>
    <name type="scientific">Shewanella baltica (strain OS195)</name>
    <dbReference type="NCBI Taxonomy" id="399599"/>
    <lineage>
        <taxon>Bacteria</taxon>
        <taxon>Pseudomonadati</taxon>
        <taxon>Pseudomonadota</taxon>
        <taxon>Gammaproteobacteria</taxon>
        <taxon>Alteromonadales</taxon>
        <taxon>Shewanellaceae</taxon>
        <taxon>Shewanella</taxon>
    </lineage>
</organism>
<accession>A9L4G2</accession>